<proteinExistence type="predicted"/>
<reference key="1">
    <citation type="journal article" date="2007" name="Virology">
        <title>Genome of the Acidianus bottle-shaped virus and insights into the replication and packaging mechanisms.</title>
        <authorList>
            <person name="Peng X."/>
            <person name="Basta T."/>
            <person name="Haring M."/>
            <person name="Garrett R.A."/>
            <person name="Prangishvili D."/>
        </authorList>
    </citation>
    <scope>NUCLEOTIDE SEQUENCE [GENOMIC DNA]</scope>
</reference>
<sequence>MESLIKAIREEFISIFSLLKKPHKFTLEELRIRLRKLHNLLLQLFELEYDINRKVEVKYALEFVDSVYNQIDYVIPETLIPFAKEQLKYAVYRFNLYYT</sequence>
<keyword id="KW-1185">Reference proteome</keyword>
<dbReference type="EMBL" id="EF432053">
    <property type="protein sequence ID" value="ABP73393.1"/>
    <property type="molecule type" value="Genomic_DNA"/>
</dbReference>
<dbReference type="RefSeq" id="YP_001210307.1">
    <property type="nucleotide sequence ID" value="NC_009452.1"/>
</dbReference>
<dbReference type="SMR" id="A4ZU89"/>
<dbReference type="GeneID" id="5129844"/>
<dbReference type="KEGG" id="vg:5129844"/>
<dbReference type="Proteomes" id="UP000000513">
    <property type="component" value="Segment"/>
</dbReference>
<organism>
    <name type="scientific">Acidianus bottle-shaped virus (isolate Italy/Pozzuoli)</name>
    <name type="common">ABV</name>
    <dbReference type="NCBI Taxonomy" id="654911"/>
    <lineage>
        <taxon>Viruses</taxon>
        <taxon>Viruses incertae sedis</taxon>
        <taxon>Ampullaviridae</taxon>
        <taxon>Bottigliavirus</taxon>
        <taxon>Bottigliavirus ABV</taxon>
    </lineage>
</organism>
<protein>
    <recommendedName>
        <fullName>Uncharacterized protein ORF99b</fullName>
    </recommendedName>
</protein>
<gene>
    <name type="ORF">ORF99b</name>
</gene>
<name>Y099B_ABVP</name>
<accession>A4ZU89</accession>
<feature type="chain" id="PRO_0000384846" description="Uncharacterized protein ORF99b">
    <location>
        <begin position="1"/>
        <end position="99"/>
    </location>
</feature>
<organismHost>
    <name type="scientific">Acidianus convivator</name>
    <dbReference type="NCBI Taxonomy" id="269667"/>
</organismHost>